<proteinExistence type="inferred from homology"/>
<protein>
    <recommendedName>
        <fullName evidence="1">1-deoxy-D-xylulose 5-phosphate reductoisomerase</fullName>
        <shortName evidence="1">DXP reductoisomerase</shortName>
        <ecNumber evidence="1">1.1.1.267</ecNumber>
    </recommendedName>
    <alternativeName>
        <fullName evidence="1">1-deoxyxylulose-5-phosphate reductoisomerase</fullName>
    </alternativeName>
    <alternativeName>
        <fullName evidence="1">2-C-methyl-D-erythritol 4-phosphate synthase</fullName>
    </alternativeName>
</protein>
<organism>
    <name type="scientific">Vesicomyosocius okutanii subsp. Calyptogena okutanii (strain HA)</name>
    <dbReference type="NCBI Taxonomy" id="412965"/>
    <lineage>
        <taxon>Bacteria</taxon>
        <taxon>Pseudomonadati</taxon>
        <taxon>Pseudomonadota</taxon>
        <taxon>Gammaproteobacteria</taxon>
        <taxon>Candidatus Pseudothioglobaceae</taxon>
        <taxon>Candidatus Vesicomyosocius</taxon>
    </lineage>
</organism>
<dbReference type="EC" id="1.1.1.267" evidence="1"/>
<dbReference type="EMBL" id="AP009247">
    <property type="protein sequence ID" value="BAF61164.1"/>
    <property type="molecule type" value="Genomic_DNA"/>
</dbReference>
<dbReference type="RefSeq" id="WP_011929434.1">
    <property type="nucleotide sequence ID" value="NC_009465.1"/>
</dbReference>
<dbReference type="SMR" id="A5CY29"/>
<dbReference type="STRING" id="412965.COSY_0025"/>
<dbReference type="KEGG" id="vok:COSY_0025"/>
<dbReference type="eggNOG" id="COG0743">
    <property type="taxonomic scope" value="Bacteria"/>
</dbReference>
<dbReference type="HOGENOM" id="CLU_035714_4_0_6"/>
<dbReference type="OrthoDB" id="9806546at2"/>
<dbReference type="UniPathway" id="UPA00056">
    <property type="reaction ID" value="UER00092"/>
</dbReference>
<dbReference type="Proteomes" id="UP000000247">
    <property type="component" value="Chromosome"/>
</dbReference>
<dbReference type="GO" id="GO:0030604">
    <property type="term" value="F:1-deoxy-D-xylulose-5-phosphate reductoisomerase activity"/>
    <property type="evidence" value="ECO:0007669"/>
    <property type="project" value="UniProtKB-UniRule"/>
</dbReference>
<dbReference type="GO" id="GO:0030145">
    <property type="term" value="F:manganese ion binding"/>
    <property type="evidence" value="ECO:0007669"/>
    <property type="project" value="TreeGrafter"/>
</dbReference>
<dbReference type="GO" id="GO:0070402">
    <property type="term" value="F:NADPH binding"/>
    <property type="evidence" value="ECO:0007669"/>
    <property type="project" value="InterPro"/>
</dbReference>
<dbReference type="GO" id="GO:0051484">
    <property type="term" value="P:isopentenyl diphosphate biosynthetic process, methylerythritol 4-phosphate pathway involved in terpenoid biosynthetic process"/>
    <property type="evidence" value="ECO:0007669"/>
    <property type="project" value="TreeGrafter"/>
</dbReference>
<dbReference type="FunFam" id="3.40.50.720:FF:000045">
    <property type="entry name" value="1-deoxy-D-xylulose 5-phosphate reductoisomerase"/>
    <property type="match status" value="1"/>
</dbReference>
<dbReference type="Gene3D" id="1.10.1740.10">
    <property type="match status" value="1"/>
</dbReference>
<dbReference type="Gene3D" id="3.40.50.720">
    <property type="entry name" value="NAD(P)-binding Rossmann-like Domain"/>
    <property type="match status" value="1"/>
</dbReference>
<dbReference type="HAMAP" id="MF_00183">
    <property type="entry name" value="DXP_reductoisom"/>
    <property type="match status" value="1"/>
</dbReference>
<dbReference type="InterPro" id="IPR003821">
    <property type="entry name" value="DXP_reductoisomerase"/>
</dbReference>
<dbReference type="InterPro" id="IPR013644">
    <property type="entry name" value="DXP_reductoisomerase_C"/>
</dbReference>
<dbReference type="InterPro" id="IPR013512">
    <property type="entry name" value="DXP_reductoisomerase_N"/>
</dbReference>
<dbReference type="InterPro" id="IPR026877">
    <property type="entry name" value="DXPR_C"/>
</dbReference>
<dbReference type="InterPro" id="IPR036169">
    <property type="entry name" value="DXPR_C_sf"/>
</dbReference>
<dbReference type="InterPro" id="IPR036291">
    <property type="entry name" value="NAD(P)-bd_dom_sf"/>
</dbReference>
<dbReference type="NCBIfam" id="TIGR00243">
    <property type="entry name" value="Dxr"/>
    <property type="match status" value="1"/>
</dbReference>
<dbReference type="NCBIfam" id="NF003938">
    <property type="entry name" value="PRK05447.1-1"/>
    <property type="match status" value="1"/>
</dbReference>
<dbReference type="NCBIfam" id="NF009114">
    <property type="entry name" value="PRK12464.1"/>
    <property type="match status" value="1"/>
</dbReference>
<dbReference type="PANTHER" id="PTHR30525">
    <property type="entry name" value="1-DEOXY-D-XYLULOSE 5-PHOSPHATE REDUCTOISOMERASE"/>
    <property type="match status" value="1"/>
</dbReference>
<dbReference type="PANTHER" id="PTHR30525:SF0">
    <property type="entry name" value="1-DEOXY-D-XYLULOSE 5-PHOSPHATE REDUCTOISOMERASE, CHLOROPLASTIC"/>
    <property type="match status" value="1"/>
</dbReference>
<dbReference type="Pfam" id="PF08436">
    <property type="entry name" value="DXP_redisom_C"/>
    <property type="match status" value="1"/>
</dbReference>
<dbReference type="Pfam" id="PF02670">
    <property type="entry name" value="DXP_reductoisom"/>
    <property type="match status" value="1"/>
</dbReference>
<dbReference type="Pfam" id="PF13288">
    <property type="entry name" value="DXPR_C"/>
    <property type="match status" value="1"/>
</dbReference>
<dbReference type="PIRSF" id="PIRSF006205">
    <property type="entry name" value="Dxp_reductismrs"/>
    <property type="match status" value="1"/>
</dbReference>
<dbReference type="SUPFAM" id="SSF69055">
    <property type="entry name" value="1-deoxy-D-xylulose-5-phosphate reductoisomerase, C-terminal domain"/>
    <property type="match status" value="1"/>
</dbReference>
<dbReference type="SUPFAM" id="SSF55347">
    <property type="entry name" value="Glyceraldehyde-3-phosphate dehydrogenase-like, C-terminal domain"/>
    <property type="match status" value="1"/>
</dbReference>
<dbReference type="SUPFAM" id="SSF51735">
    <property type="entry name" value="NAD(P)-binding Rossmann-fold domains"/>
    <property type="match status" value="1"/>
</dbReference>
<gene>
    <name evidence="1" type="primary">dxr</name>
    <name type="ordered locus">COSY_0025</name>
</gene>
<sequence>MKNITLLGATGSIGKSTLSVVDLHPDKFNIFALSANTNWKQMIKLCNKYQPSYAIMVDEQSAEKLSNAITTDIQVLSSVQALDKIVTHQDTDYVMAAIVGAIGMSSALCGAKAGKRIMLANKESLVLAGDIFMKTVKEFNAELIPVDSEHSAIFQCLKSGKSGLNKIQLTASGGPFLHTPISQFKSITPDEACAHPNWSMGRKISVDSATMMNKGLEVIEAHYLFSLTPKQIDVVIHPQSIVHSSVFYKDGSTLSQLGNPDMRTVIAYAMSYPKRMNSGVSELDLTSTASLEFYQPDFEKFTCLKLAFEALNKGGNAMITMNAANEIAVKYFLNHQISFLDIPKIIDQTLSTMKHTTLNSLEEVINNDLIAREIAHEIIKQYG</sequence>
<accession>A5CY29</accession>
<keyword id="KW-0414">Isoprene biosynthesis</keyword>
<keyword id="KW-0464">Manganese</keyword>
<keyword id="KW-0479">Metal-binding</keyword>
<keyword id="KW-0521">NADP</keyword>
<keyword id="KW-0560">Oxidoreductase</keyword>
<keyword id="KW-1185">Reference proteome</keyword>
<reference key="1">
    <citation type="journal article" date="2007" name="Curr. Biol.">
        <title>Reduced genome of the thioautotrophic intracellular symbiont in a deep-sea clam, Calyptogena okutanii.</title>
        <authorList>
            <person name="Kuwahara H."/>
            <person name="Yoshida T."/>
            <person name="Takaki Y."/>
            <person name="Shimamura S."/>
            <person name="Nishi S."/>
            <person name="Harada M."/>
            <person name="Matsuyama K."/>
            <person name="Takishita K."/>
            <person name="Kawato M."/>
            <person name="Uematsu K."/>
            <person name="Fujiwara Y."/>
            <person name="Sato T."/>
            <person name="Kato C."/>
            <person name="Kitagawa M."/>
            <person name="Kato I."/>
            <person name="Maruyama T."/>
        </authorList>
    </citation>
    <scope>NUCLEOTIDE SEQUENCE [LARGE SCALE GENOMIC DNA]</scope>
    <source>
        <strain>HA</strain>
    </source>
</reference>
<evidence type="ECO:0000255" key="1">
    <source>
        <dbReference type="HAMAP-Rule" id="MF_00183"/>
    </source>
</evidence>
<comment type="function">
    <text evidence="1">Catalyzes the NADPH-dependent rearrangement and reduction of 1-deoxy-D-xylulose-5-phosphate (DXP) to 2-C-methyl-D-erythritol 4-phosphate (MEP).</text>
</comment>
<comment type="catalytic activity">
    <reaction evidence="1">
        <text>2-C-methyl-D-erythritol 4-phosphate + NADP(+) = 1-deoxy-D-xylulose 5-phosphate + NADPH + H(+)</text>
        <dbReference type="Rhea" id="RHEA:13717"/>
        <dbReference type="ChEBI" id="CHEBI:15378"/>
        <dbReference type="ChEBI" id="CHEBI:57783"/>
        <dbReference type="ChEBI" id="CHEBI:57792"/>
        <dbReference type="ChEBI" id="CHEBI:58262"/>
        <dbReference type="ChEBI" id="CHEBI:58349"/>
        <dbReference type="EC" id="1.1.1.267"/>
    </reaction>
    <physiologicalReaction direction="right-to-left" evidence="1">
        <dbReference type="Rhea" id="RHEA:13719"/>
    </physiologicalReaction>
</comment>
<comment type="cofactor">
    <cofactor evidence="1">
        <name>Mg(2+)</name>
        <dbReference type="ChEBI" id="CHEBI:18420"/>
    </cofactor>
    <cofactor evidence="1">
        <name>Mn(2+)</name>
        <dbReference type="ChEBI" id="CHEBI:29035"/>
    </cofactor>
</comment>
<comment type="pathway">
    <text evidence="1">Isoprenoid biosynthesis; isopentenyl diphosphate biosynthesis via DXP pathway; isopentenyl diphosphate from 1-deoxy-D-xylulose 5-phosphate: step 1/6.</text>
</comment>
<comment type="similarity">
    <text evidence="1">Belongs to the DXR family.</text>
</comment>
<feature type="chain" id="PRO_1000020321" description="1-deoxy-D-xylulose 5-phosphate reductoisomerase">
    <location>
        <begin position="1"/>
        <end position="383"/>
    </location>
</feature>
<feature type="binding site" evidence="1">
    <location>
        <position position="10"/>
    </location>
    <ligand>
        <name>NADPH</name>
        <dbReference type="ChEBI" id="CHEBI:57783"/>
    </ligand>
</feature>
<feature type="binding site" evidence="1">
    <location>
        <position position="11"/>
    </location>
    <ligand>
        <name>NADPH</name>
        <dbReference type="ChEBI" id="CHEBI:57783"/>
    </ligand>
</feature>
<feature type="binding site" evidence="1">
    <location>
        <position position="12"/>
    </location>
    <ligand>
        <name>NADPH</name>
        <dbReference type="ChEBI" id="CHEBI:57783"/>
    </ligand>
</feature>
<feature type="binding site" evidence="1">
    <location>
        <position position="13"/>
    </location>
    <ligand>
        <name>NADPH</name>
        <dbReference type="ChEBI" id="CHEBI:57783"/>
    </ligand>
</feature>
<feature type="binding site" evidence="1">
    <location>
        <position position="38"/>
    </location>
    <ligand>
        <name>NADPH</name>
        <dbReference type="ChEBI" id="CHEBI:57783"/>
    </ligand>
</feature>
<feature type="binding site" evidence="1">
    <location>
        <position position="121"/>
    </location>
    <ligand>
        <name>NADPH</name>
        <dbReference type="ChEBI" id="CHEBI:57783"/>
    </ligand>
</feature>
<feature type="binding site" evidence="1">
    <location>
        <position position="122"/>
    </location>
    <ligand>
        <name>1-deoxy-D-xylulose 5-phosphate</name>
        <dbReference type="ChEBI" id="CHEBI:57792"/>
    </ligand>
</feature>
<feature type="binding site" evidence="1">
    <location>
        <position position="123"/>
    </location>
    <ligand>
        <name>NADPH</name>
        <dbReference type="ChEBI" id="CHEBI:57783"/>
    </ligand>
</feature>
<feature type="binding site" evidence="1">
    <location>
        <position position="147"/>
    </location>
    <ligand>
        <name>Mn(2+)</name>
        <dbReference type="ChEBI" id="CHEBI:29035"/>
    </ligand>
</feature>
<feature type="binding site" evidence="1">
    <location>
        <position position="148"/>
    </location>
    <ligand>
        <name>1-deoxy-D-xylulose 5-phosphate</name>
        <dbReference type="ChEBI" id="CHEBI:57792"/>
    </ligand>
</feature>
<feature type="binding site" evidence="1">
    <location>
        <position position="149"/>
    </location>
    <ligand>
        <name>1-deoxy-D-xylulose 5-phosphate</name>
        <dbReference type="ChEBI" id="CHEBI:57792"/>
    </ligand>
</feature>
<feature type="binding site" evidence="1">
    <location>
        <position position="149"/>
    </location>
    <ligand>
        <name>Mn(2+)</name>
        <dbReference type="ChEBI" id="CHEBI:29035"/>
    </ligand>
</feature>
<feature type="binding site" evidence="1">
    <location>
        <position position="172"/>
    </location>
    <ligand>
        <name>1-deoxy-D-xylulose 5-phosphate</name>
        <dbReference type="ChEBI" id="CHEBI:57792"/>
    </ligand>
</feature>
<feature type="binding site" evidence="1">
    <location>
        <position position="195"/>
    </location>
    <ligand>
        <name>1-deoxy-D-xylulose 5-phosphate</name>
        <dbReference type="ChEBI" id="CHEBI:57792"/>
    </ligand>
</feature>
<feature type="binding site" evidence="1">
    <location>
        <position position="201"/>
    </location>
    <ligand>
        <name>NADPH</name>
        <dbReference type="ChEBI" id="CHEBI:57783"/>
    </ligand>
</feature>
<feature type="binding site" evidence="1">
    <location>
        <position position="208"/>
    </location>
    <ligand>
        <name>1-deoxy-D-xylulose 5-phosphate</name>
        <dbReference type="ChEBI" id="CHEBI:57792"/>
    </ligand>
</feature>
<feature type="binding site" evidence="1">
    <location>
        <position position="213"/>
    </location>
    <ligand>
        <name>1-deoxy-D-xylulose 5-phosphate</name>
        <dbReference type="ChEBI" id="CHEBI:57792"/>
    </ligand>
</feature>
<feature type="binding site" evidence="1">
    <location>
        <position position="214"/>
    </location>
    <ligand>
        <name>1-deoxy-D-xylulose 5-phosphate</name>
        <dbReference type="ChEBI" id="CHEBI:57792"/>
    </ligand>
</feature>
<feature type="binding site" evidence="1">
    <location>
        <position position="217"/>
    </location>
    <ligand>
        <name>1-deoxy-D-xylulose 5-phosphate</name>
        <dbReference type="ChEBI" id="CHEBI:57792"/>
    </ligand>
</feature>
<feature type="binding site" evidence="1">
    <location>
        <position position="217"/>
    </location>
    <ligand>
        <name>Mn(2+)</name>
        <dbReference type="ChEBI" id="CHEBI:29035"/>
    </ligand>
</feature>
<name>DXR_VESOH</name>